<sequence length="104" mass="11536">MSQSFEGELKTLLRSGKVILGTRKTLKLLKTGKVKGVVVSSTLRQDLKDDIMTFSKFSDIPIYLYKGSGYELGTLCGKPFMVSVIGIVDEGESKILEFIKEVKQ</sequence>
<evidence type="ECO:0000305" key="1"/>
<name>RL30E_SULAC</name>
<feature type="chain" id="PRO_0000146158" description="Large ribosomal subunit protein eL30">
    <location>
        <begin position="1"/>
        <end position="104"/>
    </location>
</feature>
<dbReference type="EMBL" id="X14818">
    <property type="protein sequence ID" value="CAA32927.1"/>
    <property type="molecule type" value="Genomic_DNA"/>
</dbReference>
<dbReference type="EMBL" id="CP000077">
    <property type="protein sequence ID" value="AAY80070.1"/>
    <property type="molecule type" value="Genomic_DNA"/>
</dbReference>
<dbReference type="RefSeq" id="WP_011277572.1">
    <property type="nucleotide sequence ID" value="NC_007181.1"/>
</dbReference>
<dbReference type="PDB" id="8HKU">
    <property type="method" value="EM"/>
    <property type="resolution" value="2.72 A"/>
    <property type="chains" value="L30E=5-98"/>
</dbReference>
<dbReference type="PDB" id="8HKV">
    <property type="method" value="EM"/>
    <property type="resolution" value="4.94 A"/>
    <property type="chains" value="L30E=5-98"/>
</dbReference>
<dbReference type="PDB" id="8HKY">
    <property type="method" value="EM"/>
    <property type="resolution" value="4.45 A"/>
    <property type="chains" value="L30E=5-98"/>
</dbReference>
<dbReference type="PDB" id="8HKZ">
    <property type="method" value="EM"/>
    <property type="resolution" value="4.78 A"/>
    <property type="chains" value="L30E=5-98"/>
</dbReference>
<dbReference type="PDB" id="8HL1">
    <property type="method" value="EM"/>
    <property type="resolution" value="3.93 A"/>
    <property type="chains" value="L30E=5-98"/>
</dbReference>
<dbReference type="PDB" id="8HL2">
    <property type="method" value="EM"/>
    <property type="resolution" value="4.10 A"/>
    <property type="chains" value="L30E=5-98"/>
</dbReference>
<dbReference type="PDB" id="8HL3">
    <property type="method" value="EM"/>
    <property type="resolution" value="4.80 A"/>
    <property type="chains" value="L30E=5-98"/>
</dbReference>
<dbReference type="PDB" id="8HL4">
    <property type="method" value="EM"/>
    <property type="resolution" value="4.62 A"/>
    <property type="chains" value="L30E=5-98"/>
</dbReference>
<dbReference type="PDB" id="8HL5">
    <property type="method" value="EM"/>
    <property type="resolution" value="5.72 A"/>
    <property type="chains" value="L30E=5-98"/>
</dbReference>
<dbReference type="PDBsum" id="8HKU"/>
<dbReference type="PDBsum" id="8HKV"/>
<dbReference type="PDBsum" id="8HKY"/>
<dbReference type="PDBsum" id="8HKZ"/>
<dbReference type="PDBsum" id="8HL1"/>
<dbReference type="PDBsum" id="8HL2"/>
<dbReference type="PDBsum" id="8HL3"/>
<dbReference type="PDBsum" id="8HL4"/>
<dbReference type="PDBsum" id="8HL5"/>
<dbReference type="EMDB" id="EMD-34860"/>
<dbReference type="EMDB" id="EMD-34861"/>
<dbReference type="EMDB" id="EMD-34863"/>
<dbReference type="EMDB" id="EMD-34864"/>
<dbReference type="EMDB" id="EMD-34866"/>
<dbReference type="EMDB" id="EMD-34867"/>
<dbReference type="EMDB" id="EMD-34868"/>
<dbReference type="EMDB" id="EMD-34869"/>
<dbReference type="EMDB" id="EMD-34870"/>
<dbReference type="SMR" id="P11522"/>
<dbReference type="STRING" id="330779.Saci_0690"/>
<dbReference type="GeneID" id="14551205"/>
<dbReference type="KEGG" id="sai:Saci_0690"/>
<dbReference type="PATRIC" id="fig|330779.12.peg.658"/>
<dbReference type="eggNOG" id="arCOG01752">
    <property type="taxonomic scope" value="Archaea"/>
</dbReference>
<dbReference type="HOGENOM" id="CLU_130502_1_0_2"/>
<dbReference type="Proteomes" id="UP000001018">
    <property type="component" value="Chromosome"/>
</dbReference>
<dbReference type="GO" id="GO:0022625">
    <property type="term" value="C:cytosolic large ribosomal subunit"/>
    <property type="evidence" value="ECO:0007669"/>
    <property type="project" value="InterPro"/>
</dbReference>
<dbReference type="GO" id="GO:0003723">
    <property type="term" value="F:RNA binding"/>
    <property type="evidence" value="ECO:0007669"/>
    <property type="project" value="InterPro"/>
</dbReference>
<dbReference type="GO" id="GO:0003735">
    <property type="term" value="F:structural constituent of ribosome"/>
    <property type="evidence" value="ECO:0007669"/>
    <property type="project" value="InterPro"/>
</dbReference>
<dbReference type="GO" id="GO:0006412">
    <property type="term" value="P:translation"/>
    <property type="evidence" value="ECO:0007669"/>
    <property type="project" value="UniProtKB-UniRule"/>
</dbReference>
<dbReference type="Gene3D" id="3.30.1330.30">
    <property type="match status" value="1"/>
</dbReference>
<dbReference type="HAMAP" id="MF_00481">
    <property type="entry name" value="Ribosomal_eL30"/>
    <property type="match status" value="1"/>
</dbReference>
<dbReference type="InterPro" id="IPR000231">
    <property type="entry name" value="Ribosomal_eL30"/>
</dbReference>
<dbReference type="InterPro" id="IPR039109">
    <property type="entry name" value="Ribosomal_eL30-like"/>
</dbReference>
<dbReference type="InterPro" id="IPR029064">
    <property type="entry name" value="Ribosomal_eL30-like_sf"/>
</dbReference>
<dbReference type="InterPro" id="IPR022991">
    <property type="entry name" value="Ribosomal_eL30_CS"/>
</dbReference>
<dbReference type="InterPro" id="IPR004038">
    <property type="entry name" value="Ribosomal_eL8/eL30/eS12/Gad45"/>
</dbReference>
<dbReference type="NCBIfam" id="NF002172">
    <property type="entry name" value="PRK01018.1"/>
    <property type="match status" value="1"/>
</dbReference>
<dbReference type="PANTHER" id="PTHR11449">
    <property type="entry name" value="RIBOSOMAL PROTEIN L30"/>
    <property type="match status" value="1"/>
</dbReference>
<dbReference type="Pfam" id="PF01248">
    <property type="entry name" value="Ribosomal_L7Ae"/>
    <property type="match status" value="1"/>
</dbReference>
<dbReference type="SUPFAM" id="SSF55315">
    <property type="entry name" value="L30e-like"/>
    <property type="match status" value="1"/>
</dbReference>
<dbReference type="PROSITE" id="PS00709">
    <property type="entry name" value="RIBOSOMAL_L30E_1"/>
    <property type="match status" value="1"/>
</dbReference>
<dbReference type="PROSITE" id="PS00993">
    <property type="entry name" value="RIBOSOMAL_L30E_2"/>
    <property type="match status" value="1"/>
</dbReference>
<reference key="1">
    <citation type="journal article" date="1989" name="Nucleic Acids Res.">
        <title>Organization and nucleotide sequence of the genes encoding the large subunits A, B and C of the DNA-dependent RNA polymerase of the archaebacterium Sulfolobus acidocaldarius.</title>
        <authorList>
            <person name="Puehler G."/>
            <person name="Lottspeich F."/>
            <person name="Zillig W."/>
        </authorList>
    </citation>
    <scope>NUCLEOTIDE SEQUENCE [GENOMIC DNA]</scope>
    <source>
        <strain>ATCC 33909 / DSM 639 / JCM 8929 / NBRC 15157 / NCIMB 11770</strain>
    </source>
</reference>
<reference key="2">
    <citation type="journal article" date="2005" name="J. Bacteriol.">
        <title>The genome of Sulfolobus acidocaldarius, a model organism of the Crenarchaeota.</title>
        <authorList>
            <person name="Chen L."/>
            <person name="Bruegger K."/>
            <person name="Skovgaard M."/>
            <person name="Redder P."/>
            <person name="She Q."/>
            <person name="Torarinsson E."/>
            <person name="Greve B."/>
            <person name="Awayez M."/>
            <person name="Zibat A."/>
            <person name="Klenk H.-P."/>
            <person name="Garrett R.A."/>
        </authorList>
    </citation>
    <scope>NUCLEOTIDE SEQUENCE [LARGE SCALE GENOMIC DNA]</scope>
    <source>
        <strain>ATCC 33909 / DSM 639 / JCM 8929 / NBRC 15157 / NCIMB 11770</strain>
    </source>
</reference>
<proteinExistence type="evidence at protein level"/>
<gene>
    <name type="primary">rpl30e</name>
    <name type="ordered locus">Saci_0690</name>
</gene>
<keyword id="KW-0002">3D-structure</keyword>
<keyword id="KW-1185">Reference proteome</keyword>
<keyword id="KW-0687">Ribonucleoprotein</keyword>
<keyword id="KW-0689">Ribosomal protein</keyword>
<organism>
    <name type="scientific">Sulfolobus acidocaldarius (strain ATCC 33909 / DSM 639 / JCM 8929 / NBRC 15157 / NCIMB 11770)</name>
    <dbReference type="NCBI Taxonomy" id="330779"/>
    <lineage>
        <taxon>Archaea</taxon>
        <taxon>Thermoproteota</taxon>
        <taxon>Thermoprotei</taxon>
        <taxon>Sulfolobales</taxon>
        <taxon>Sulfolobaceae</taxon>
        <taxon>Sulfolobus</taxon>
    </lineage>
</organism>
<protein>
    <recommendedName>
        <fullName evidence="1">Large ribosomal subunit protein eL30</fullName>
    </recommendedName>
    <alternativeName>
        <fullName>50S ribosomal protein L30e</fullName>
    </alternativeName>
</protein>
<comment type="similarity">
    <text evidence="1">Belongs to the eukaryotic ribosomal protein eL30 family.</text>
</comment>
<accession>P11522</accession>
<accession>Q4JAV9</accession>